<feature type="chain" id="PRO_1000100408" description="Ribonuclease P protein component">
    <location>
        <begin position="1"/>
        <end position="148"/>
    </location>
</feature>
<feature type="region of interest" description="Disordered" evidence="2">
    <location>
        <begin position="119"/>
        <end position="148"/>
    </location>
</feature>
<comment type="function">
    <text evidence="1">RNaseP catalyzes the removal of the 5'-leader sequence from pre-tRNA to produce the mature 5'-terminus. It can also cleave other RNA substrates such as 4.5S RNA. The protein component plays an auxiliary but essential role in vivo by binding to the 5'-leader sequence and broadening the substrate specificity of the ribozyme.</text>
</comment>
<comment type="catalytic activity">
    <reaction evidence="1">
        <text>Endonucleolytic cleavage of RNA, removing 5'-extranucleotides from tRNA precursor.</text>
        <dbReference type="EC" id="3.1.26.5"/>
    </reaction>
</comment>
<comment type="subunit">
    <text evidence="1">Consists of a catalytic RNA component (M1 or rnpB) and a protein subunit.</text>
</comment>
<comment type="similarity">
    <text evidence="1">Belongs to the RnpA family.</text>
</comment>
<evidence type="ECO:0000255" key="1">
    <source>
        <dbReference type="HAMAP-Rule" id="MF_00227"/>
    </source>
</evidence>
<evidence type="ECO:0000256" key="2">
    <source>
        <dbReference type="SAM" id="MobiDB-lite"/>
    </source>
</evidence>
<sequence>MNASNPCRRFPRSARVRTRAQYTVVFDTARRTSDPLLSLHWRSGETPPRLGMAVSRKVDTRAVGRNRIKRVLRDAMRHLLPELAGGDYVIVARSAAAKATNPQIRDAFVRLLRRAGALPLPAAPGTMPPARAPRPSSLSPTEPDPRSD</sequence>
<keyword id="KW-0255">Endonuclease</keyword>
<keyword id="KW-0378">Hydrolase</keyword>
<keyword id="KW-0540">Nuclease</keyword>
<keyword id="KW-0694">RNA-binding</keyword>
<keyword id="KW-0819">tRNA processing</keyword>
<organism>
    <name type="scientific">Xanthomonas campestris pv. campestris (strain B100)</name>
    <dbReference type="NCBI Taxonomy" id="509169"/>
    <lineage>
        <taxon>Bacteria</taxon>
        <taxon>Pseudomonadati</taxon>
        <taxon>Pseudomonadota</taxon>
        <taxon>Gammaproteobacteria</taxon>
        <taxon>Lysobacterales</taxon>
        <taxon>Lysobacteraceae</taxon>
        <taxon>Xanthomonas</taxon>
    </lineage>
</organism>
<dbReference type="EC" id="3.1.26.5" evidence="1"/>
<dbReference type="EMBL" id="AM920689">
    <property type="protein sequence ID" value="CAP53840.1"/>
    <property type="molecule type" value="Genomic_DNA"/>
</dbReference>
<dbReference type="SMR" id="B0RMM7"/>
<dbReference type="KEGG" id="xca:xcc-b100_4467"/>
<dbReference type="HOGENOM" id="CLU_117179_3_0_6"/>
<dbReference type="Proteomes" id="UP000001188">
    <property type="component" value="Chromosome"/>
</dbReference>
<dbReference type="GO" id="GO:0030677">
    <property type="term" value="C:ribonuclease P complex"/>
    <property type="evidence" value="ECO:0007669"/>
    <property type="project" value="TreeGrafter"/>
</dbReference>
<dbReference type="GO" id="GO:0042781">
    <property type="term" value="F:3'-tRNA processing endoribonuclease activity"/>
    <property type="evidence" value="ECO:0007669"/>
    <property type="project" value="TreeGrafter"/>
</dbReference>
<dbReference type="GO" id="GO:0004526">
    <property type="term" value="F:ribonuclease P activity"/>
    <property type="evidence" value="ECO:0007669"/>
    <property type="project" value="UniProtKB-UniRule"/>
</dbReference>
<dbReference type="GO" id="GO:0000049">
    <property type="term" value="F:tRNA binding"/>
    <property type="evidence" value="ECO:0007669"/>
    <property type="project" value="UniProtKB-UniRule"/>
</dbReference>
<dbReference type="GO" id="GO:0001682">
    <property type="term" value="P:tRNA 5'-leader removal"/>
    <property type="evidence" value="ECO:0007669"/>
    <property type="project" value="UniProtKB-UniRule"/>
</dbReference>
<dbReference type="FunFam" id="3.30.230.10:FF:000082">
    <property type="entry name" value="Ribonuclease P protein component"/>
    <property type="match status" value="1"/>
</dbReference>
<dbReference type="Gene3D" id="3.30.230.10">
    <property type="match status" value="1"/>
</dbReference>
<dbReference type="HAMAP" id="MF_00227">
    <property type="entry name" value="RNase_P"/>
    <property type="match status" value="1"/>
</dbReference>
<dbReference type="InterPro" id="IPR020568">
    <property type="entry name" value="Ribosomal_Su5_D2-typ_SF"/>
</dbReference>
<dbReference type="InterPro" id="IPR014721">
    <property type="entry name" value="Ribsml_uS5_D2-typ_fold_subgr"/>
</dbReference>
<dbReference type="InterPro" id="IPR000100">
    <property type="entry name" value="RNase_P"/>
</dbReference>
<dbReference type="InterPro" id="IPR020539">
    <property type="entry name" value="RNase_P_CS"/>
</dbReference>
<dbReference type="NCBIfam" id="TIGR00188">
    <property type="entry name" value="rnpA"/>
    <property type="match status" value="1"/>
</dbReference>
<dbReference type="PANTHER" id="PTHR33992">
    <property type="entry name" value="RIBONUCLEASE P PROTEIN COMPONENT"/>
    <property type="match status" value="1"/>
</dbReference>
<dbReference type="PANTHER" id="PTHR33992:SF1">
    <property type="entry name" value="RIBONUCLEASE P PROTEIN COMPONENT"/>
    <property type="match status" value="1"/>
</dbReference>
<dbReference type="Pfam" id="PF00825">
    <property type="entry name" value="Ribonuclease_P"/>
    <property type="match status" value="1"/>
</dbReference>
<dbReference type="SUPFAM" id="SSF54211">
    <property type="entry name" value="Ribosomal protein S5 domain 2-like"/>
    <property type="match status" value="1"/>
</dbReference>
<dbReference type="PROSITE" id="PS00648">
    <property type="entry name" value="RIBONUCLEASE_P"/>
    <property type="match status" value="1"/>
</dbReference>
<accession>B0RMM7</accession>
<reference key="1">
    <citation type="journal article" date="2008" name="J. Biotechnol.">
        <title>The genome of Xanthomonas campestris pv. campestris B100 and its use for the reconstruction of metabolic pathways involved in xanthan biosynthesis.</title>
        <authorList>
            <person name="Vorhoelter F.-J."/>
            <person name="Schneiker S."/>
            <person name="Goesmann A."/>
            <person name="Krause L."/>
            <person name="Bekel T."/>
            <person name="Kaiser O."/>
            <person name="Linke B."/>
            <person name="Patschkowski T."/>
            <person name="Rueckert C."/>
            <person name="Schmid J."/>
            <person name="Sidhu V.K."/>
            <person name="Sieber V."/>
            <person name="Tauch A."/>
            <person name="Watt S.A."/>
            <person name="Weisshaar B."/>
            <person name="Becker A."/>
            <person name="Niehaus K."/>
            <person name="Puehler A."/>
        </authorList>
    </citation>
    <scope>NUCLEOTIDE SEQUENCE [LARGE SCALE GENOMIC DNA]</scope>
    <source>
        <strain>B100</strain>
    </source>
</reference>
<gene>
    <name evidence="1" type="primary">rnpA</name>
    <name type="ordered locus">xcc-b100_4467</name>
</gene>
<protein>
    <recommendedName>
        <fullName evidence="1">Ribonuclease P protein component</fullName>
        <shortName evidence="1">RNase P protein</shortName>
        <shortName evidence="1">RNaseP protein</shortName>
        <ecNumber evidence="1">3.1.26.5</ecNumber>
    </recommendedName>
    <alternativeName>
        <fullName evidence="1">Protein C5</fullName>
    </alternativeName>
</protein>
<name>RNPA_XANCB</name>
<proteinExistence type="inferred from homology"/>